<organism>
    <name type="scientific">Homo sapiens</name>
    <name type="common">Human</name>
    <dbReference type="NCBI Taxonomy" id="9606"/>
    <lineage>
        <taxon>Eukaryota</taxon>
        <taxon>Metazoa</taxon>
        <taxon>Chordata</taxon>
        <taxon>Craniata</taxon>
        <taxon>Vertebrata</taxon>
        <taxon>Euteleostomi</taxon>
        <taxon>Mammalia</taxon>
        <taxon>Eutheria</taxon>
        <taxon>Euarchontoglires</taxon>
        <taxon>Primates</taxon>
        <taxon>Haplorrhini</taxon>
        <taxon>Catarrhini</taxon>
        <taxon>Hominidae</taxon>
        <taxon>Homo</taxon>
    </lineage>
</organism>
<dbReference type="EC" id="2.7.8.7" evidence="2 3 4 5"/>
<dbReference type="EMBL" id="AF302110">
    <property type="protein sequence ID" value="AAG30872.1"/>
    <property type="molecule type" value="mRNA"/>
</dbReference>
<dbReference type="EMBL" id="AF151838">
    <property type="protein sequence ID" value="AAD34075.1"/>
    <property type="status" value="ALT_FRAME"/>
    <property type="molecule type" value="mRNA"/>
</dbReference>
<dbReference type="EMBL" id="AF151057">
    <property type="protein sequence ID" value="AAF36143.1"/>
    <property type="molecule type" value="mRNA"/>
</dbReference>
<dbReference type="EMBL" id="AF136978">
    <property type="protein sequence ID" value="AAG49439.1"/>
    <property type="molecule type" value="mRNA"/>
</dbReference>
<dbReference type="EMBL" id="AF201943">
    <property type="protein sequence ID" value="AAF86879.1"/>
    <property type="status" value="ALT_INIT"/>
    <property type="molecule type" value="mRNA"/>
</dbReference>
<dbReference type="EMBL" id="AK312529">
    <property type="protein sequence ID" value="BAG35428.1"/>
    <property type="molecule type" value="mRNA"/>
</dbReference>
<dbReference type="EMBL" id="AK293362">
    <property type="protein sequence ID" value="BAG56878.1"/>
    <property type="molecule type" value="mRNA"/>
</dbReference>
<dbReference type="EMBL" id="AP001001">
    <property type="status" value="NOT_ANNOTATED_CDS"/>
    <property type="molecule type" value="Genomic_DNA"/>
</dbReference>
<dbReference type="EMBL" id="CH471065">
    <property type="protein sequence ID" value="EAW67078.1"/>
    <property type="molecule type" value="Genomic_DNA"/>
</dbReference>
<dbReference type="EMBL" id="BC015470">
    <property type="protein sequence ID" value="AAH15470.1"/>
    <property type="molecule type" value="mRNA"/>
</dbReference>
<dbReference type="EMBL" id="BC016728">
    <property type="protein sequence ID" value="AAH16728.1"/>
    <property type="molecule type" value="mRNA"/>
</dbReference>
<dbReference type="EMBL" id="AL050073">
    <property type="protein sequence ID" value="CAB43257.1"/>
    <property type="molecule type" value="mRNA"/>
</dbReference>
<dbReference type="CCDS" id="CCDS31664.1">
    <molecule id="Q9NRN7-1"/>
</dbReference>
<dbReference type="PIR" id="T08733">
    <property type="entry name" value="T08733"/>
</dbReference>
<dbReference type="RefSeq" id="NP_056238.2">
    <molecule id="Q9NRN7-1"/>
    <property type="nucleotide sequence ID" value="NM_015423.2"/>
</dbReference>
<dbReference type="PDB" id="2BYD">
    <property type="method" value="X-ray"/>
    <property type="resolution" value="2.00 A"/>
    <property type="chains" value="A=14-309"/>
</dbReference>
<dbReference type="PDB" id="2C43">
    <property type="method" value="X-ray"/>
    <property type="resolution" value="1.93 A"/>
    <property type="chains" value="A=14-309"/>
</dbReference>
<dbReference type="PDB" id="2CG5">
    <property type="method" value="X-ray"/>
    <property type="resolution" value="2.70 A"/>
    <property type="chains" value="A=14-309"/>
</dbReference>
<dbReference type="PDBsum" id="2BYD"/>
<dbReference type="PDBsum" id="2C43"/>
<dbReference type="PDBsum" id="2CG5"/>
<dbReference type="SMR" id="Q9NRN7"/>
<dbReference type="BioGRID" id="121927">
    <property type="interactions" value="87"/>
</dbReference>
<dbReference type="FunCoup" id="Q9NRN7">
    <property type="interactions" value="1009"/>
</dbReference>
<dbReference type="IntAct" id="Q9NRN7">
    <property type="interactions" value="34"/>
</dbReference>
<dbReference type="MINT" id="Q9NRN7"/>
<dbReference type="STRING" id="9606.ENSP00000278618"/>
<dbReference type="ChEMBL" id="CHEMBL3137295"/>
<dbReference type="SwissLipids" id="SLP:000001260"/>
<dbReference type="GlyGen" id="Q9NRN7">
    <property type="glycosylation" value="1 site, 1 O-linked glycan (1 site)"/>
</dbReference>
<dbReference type="iPTMnet" id="Q9NRN7"/>
<dbReference type="PhosphoSitePlus" id="Q9NRN7"/>
<dbReference type="SwissPalm" id="Q9NRN7"/>
<dbReference type="BioMuta" id="AASDHPPT"/>
<dbReference type="DMDM" id="81170356"/>
<dbReference type="jPOST" id="Q9NRN7"/>
<dbReference type="MassIVE" id="Q9NRN7"/>
<dbReference type="PaxDb" id="9606-ENSP00000278618"/>
<dbReference type="PeptideAtlas" id="Q9NRN7"/>
<dbReference type="ProteomicsDB" id="3900"/>
<dbReference type="ProteomicsDB" id="82396">
    <molecule id="Q9NRN7-1"/>
</dbReference>
<dbReference type="Pumba" id="Q9NRN7"/>
<dbReference type="Antibodypedia" id="18138">
    <property type="antibodies" value="212 antibodies from 26 providers"/>
</dbReference>
<dbReference type="DNASU" id="60496"/>
<dbReference type="Ensembl" id="ENST00000278618.9">
    <molecule id="Q9NRN7-1"/>
    <property type="protein sequence ID" value="ENSP00000278618.4"/>
    <property type="gene ID" value="ENSG00000149313.11"/>
</dbReference>
<dbReference type="Ensembl" id="ENST00000525660.1">
    <molecule id="Q9NRN7-2"/>
    <property type="protein sequence ID" value="ENSP00000437144.1"/>
    <property type="gene ID" value="ENSG00000149313.11"/>
</dbReference>
<dbReference type="GeneID" id="60496"/>
<dbReference type="KEGG" id="hsa:60496"/>
<dbReference type="MANE-Select" id="ENST00000278618.9">
    <property type="protein sequence ID" value="ENSP00000278618.4"/>
    <property type="RefSeq nucleotide sequence ID" value="NM_015423.3"/>
    <property type="RefSeq protein sequence ID" value="NP_056238.2"/>
</dbReference>
<dbReference type="UCSC" id="uc001pjc.2">
    <molecule id="Q9NRN7-1"/>
    <property type="organism name" value="human"/>
</dbReference>
<dbReference type="AGR" id="HGNC:14235"/>
<dbReference type="CTD" id="60496"/>
<dbReference type="DisGeNET" id="60496"/>
<dbReference type="GeneCards" id="AASDHPPT"/>
<dbReference type="HGNC" id="HGNC:14235">
    <property type="gene designation" value="AASDHPPT"/>
</dbReference>
<dbReference type="HPA" id="ENSG00000149313">
    <property type="expression patterns" value="Low tissue specificity"/>
</dbReference>
<dbReference type="MIM" id="607756">
    <property type="type" value="gene"/>
</dbReference>
<dbReference type="neXtProt" id="NX_Q9NRN7"/>
<dbReference type="OpenTargets" id="ENSG00000149313"/>
<dbReference type="PharmGKB" id="PA24368"/>
<dbReference type="VEuPathDB" id="HostDB:ENSG00000149313"/>
<dbReference type="eggNOG" id="KOG0945">
    <property type="taxonomic scope" value="Eukaryota"/>
</dbReference>
<dbReference type="GeneTree" id="ENSGT00390000004663"/>
<dbReference type="HOGENOM" id="CLU_1854476_0_0_1"/>
<dbReference type="InParanoid" id="Q9NRN7"/>
<dbReference type="OMA" id="WVFEESL"/>
<dbReference type="OrthoDB" id="26719at2759"/>
<dbReference type="PAN-GO" id="Q9NRN7">
    <property type="GO annotations" value="3 GO annotations based on evolutionary models"/>
</dbReference>
<dbReference type="PhylomeDB" id="Q9NRN7"/>
<dbReference type="TreeFam" id="TF313753"/>
<dbReference type="BioCyc" id="MetaCyc:HS14278-MONOMER"/>
<dbReference type="BRENDA" id="2.7.8.7">
    <property type="organism ID" value="2681"/>
</dbReference>
<dbReference type="PathwayCommons" id="Q9NRN7"/>
<dbReference type="Reactome" id="R-HSA-199220">
    <property type="pathway name" value="Vitamin B5 (pantothenate) metabolism"/>
</dbReference>
<dbReference type="SABIO-RK" id="Q9NRN7"/>
<dbReference type="SignaLink" id="Q9NRN7"/>
<dbReference type="BioGRID-ORCS" id="60496">
    <property type="hits" value="337 hits in 1133 CRISPR screens"/>
</dbReference>
<dbReference type="CD-CODE" id="FB4E32DD">
    <property type="entry name" value="Presynaptic clusters and postsynaptic densities"/>
</dbReference>
<dbReference type="ChiTaRS" id="AASDHPPT">
    <property type="organism name" value="human"/>
</dbReference>
<dbReference type="EvolutionaryTrace" id="Q9NRN7"/>
<dbReference type="GeneWiki" id="AASDHPPT"/>
<dbReference type="GenomeRNAi" id="60496"/>
<dbReference type="Pharos" id="Q9NRN7">
    <property type="development level" value="Tbio"/>
</dbReference>
<dbReference type="PRO" id="PR:Q9NRN7"/>
<dbReference type="Proteomes" id="UP000005640">
    <property type="component" value="Chromosome 11"/>
</dbReference>
<dbReference type="RNAct" id="Q9NRN7">
    <property type="molecule type" value="protein"/>
</dbReference>
<dbReference type="Bgee" id="ENSG00000149313">
    <property type="expression patterns" value="Expressed in cortical plate and 209 other cell types or tissues"/>
</dbReference>
<dbReference type="ExpressionAtlas" id="Q9NRN7">
    <property type="expression patterns" value="baseline and differential"/>
</dbReference>
<dbReference type="GO" id="GO:0005829">
    <property type="term" value="C:cytosol"/>
    <property type="evidence" value="ECO:0000314"/>
    <property type="project" value="UniProtKB"/>
</dbReference>
<dbReference type="GO" id="GO:0070062">
    <property type="term" value="C:extracellular exosome"/>
    <property type="evidence" value="ECO:0007005"/>
    <property type="project" value="UniProtKB"/>
</dbReference>
<dbReference type="GO" id="GO:0008897">
    <property type="term" value="F:holo-[acyl-carrier-protein] synthase activity"/>
    <property type="evidence" value="ECO:0000314"/>
    <property type="project" value="UniProtKB"/>
</dbReference>
<dbReference type="GO" id="GO:0000287">
    <property type="term" value="F:magnesium ion binding"/>
    <property type="evidence" value="ECO:0000314"/>
    <property type="project" value="UniProtKB"/>
</dbReference>
<dbReference type="GO" id="GO:0009258">
    <property type="term" value="P:10-formyltetrahydrofolate catabolic process"/>
    <property type="evidence" value="ECO:0000315"/>
    <property type="project" value="UniProtKB"/>
</dbReference>
<dbReference type="GO" id="GO:0019878">
    <property type="term" value="P:lysine biosynthetic process via aminoadipic acid"/>
    <property type="evidence" value="ECO:0000318"/>
    <property type="project" value="GO_Central"/>
</dbReference>
<dbReference type="GO" id="GO:0015939">
    <property type="term" value="P:pantothenate metabolic process"/>
    <property type="evidence" value="ECO:0000304"/>
    <property type="project" value="Reactome"/>
</dbReference>
<dbReference type="GO" id="GO:0051604">
    <property type="term" value="P:protein maturation"/>
    <property type="evidence" value="ECO:0000314"/>
    <property type="project" value="UniProtKB"/>
</dbReference>
<dbReference type="FunFam" id="3.90.470.20:FF:000006">
    <property type="entry name" value="L-aminoadipate-semialdehyde dehydrogenase-phosphopantetheinyl transferase"/>
    <property type="match status" value="1"/>
</dbReference>
<dbReference type="Gene3D" id="3.90.470.20">
    <property type="entry name" value="4'-phosphopantetheinyl transferase domain"/>
    <property type="match status" value="2"/>
</dbReference>
<dbReference type="InterPro" id="IPR008278">
    <property type="entry name" value="4-PPantetheinyl_Trfase_dom"/>
</dbReference>
<dbReference type="InterPro" id="IPR037143">
    <property type="entry name" value="4-PPantetheinyl_Trfase_dom_sf"/>
</dbReference>
<dbReference type="InterPro" id="IPR055066">
    <property type="entry name" value="AASDHPPT_N"/>
</dbReference>
<dbReference type="InterPro" id="IPR050559">
    <property type="entry name" value="P-Pant_transferase_sf"/>
</dbReference>
<dbReference type="PANTHER" id="PTHR12215:SF10">
    <property type="entry name" value="L-AMINOADIPATE-SEMIALDEHYDE DEHYDROGENASE-PHOSPHOPANTETHEINYL TRANSFERASE"/>
    <property type="match status" value="1"/>
</dbReference>
<dbReference type="PANTHER" id="PTHR12215">
    <property type="entry name" value="PHOSPHOPANTETHEINE TRANSFERASE"/>
    <property type="match status" value="1"/>
</dbReference>
<dbReference type="Pfam" id="PF22624">
    <property type="entry name" value="AASDHPPT_N"/>
    <property type="match status" value="1"/>
</dbReference>
<dbReference type="Pfam" id="PF01648">
    <property type="entry name" value="ACPS"/>
    <property type="match status" value="1"/>
</dbReference>
<dbReference type="SUPFAM" id="SSF56214">
    <property type="entry name" value="4'-phosphopantetheinyl transferase"/>
    <property type="match status" value="2"/>
</dbReference>
<reference key="1">
    <citation type="journal article" date="2001" name="Mol. Genet. Metab.">
        <title>Identification of the alpha-aminoadipic semialdehyde dehydrogenase-phosphopantetheinyl transferase gene, the human ortholog of the yeast LYS5 gene.</title>
        <authorList>
            <person name="Praphanphoj V."/>
            <person name="Sacksteder K.A."/>
            <person name="Gould S.J."/>
            <person name="Thomas G.H."/>
            <person name="Geraghty M.T."/>
        </authorList>
    </citation>
    <scope>NUCLEOTIDE SEQUENCE [MRNA] (ISOFORM 1)</scope>
    <scope>FUNCTION</scope>
    <scope>TISSUE SPECIFICITY</scope>
</reference>
<reference key="2">
    <citation type="journal article" date="2000" name="Genome Res.">
        <title>Identification of novel human genes evolutionarily conserved in Caenorhabditis elegans by comparative proteomics.</title>
        <authorList>
            <person name="Lai C.-H."/>
            <person name="Chou C.-Y."/>
            <person name="Ch'ang L.-Y."/>
            <person name="Liu C.-S."/>
            <person name="Lin W.-C."/>
        </authorList>
    </citation>
    <scope>NUCLEOTIDE SEQUENCE [LARGE SCALE MRNA] (ISOFORM 1)</scope>
</reference>
<reference key="3">
    <citation type="journal article" date="2000" name="Genome Res.">
        <title>Cloning and functional analysis of cDNAs with open reading frames for 300 previously undefined genes expressed in CD34+ hematopoietic stem/progenitor cells.</title>
        <authorList>
            <person name="Zhang Q.-H."/>
            <person name="Ye M."/>
            <person name="Wu X.-Y."/>
            <person name="Ren S.-X."/>
            <person name="Zhao M."/>
            <person name="Zhao C.-J."/>
            <person name="Fu G."/>
            <person name="Shen Y."/>
            <person name="Fan H.-Y."/>
            <person name="Lu G."/>
            <person name="Zhong M."/>
            <person name="Xu X.-R."/>
            <person name="Han Z.-G."/>
            <person name="Zhang J.-W."/>
            <person name="Tao J."/>
            <person name="Huang Q.-H."/>
            <person name="Zhou J."/>
            <person name="Hu G.-X."/>
            <person name="Gu J."/>
            <person name="Chen S.-J."/>
            <person name="Chen Z."/>
        </authorList>
    </citation>
    <scope>NUCLEOTIDE SEQUENCE [LARGE SCALE MRNA] (ISOFORM 1)</scope>
    <source>
        <tissue>Umbilical cord blood</tissue>
    </source>
</reference>
<reference key="4">
    <citation type="journal article" date="2000" name="Proc. Natl. Acad. Sci. U.S.A.">
        <title>Gene expression profiling in the human hypothalamus-pituitary-adrenal axis and full-length cDNA cloning.</title>
        <authorList>
            <person name="Hu R.-M."/>
            <person name="Han Z.-G."/>
            <person name="Song H.-D."/>
            <person name="Peng Y.-D."/>
            <person name="Huang Q.-H."/>
            <person name="Ren S.-X."/>
            <person name="Gu Y.-J."/>
            <person name="Huang C.-H."/>
            <person name="Li Y.-B."/>
            <person name="Jiang C.-L."/>
            <person name="Fu G."/>
            <person name="Zhang Q.-H."/>
            <person name="Gu B.-W."/>
            <person name="Dai M."/>
            <person name="Mao Y.-F."/>
            <person name="Gao G.-F."/>
            <person name="Rong R."/>
            <person name="Ye M."/>
            <person name="Zhou J."/>
            <person name="Xu S.-H."/>
            <person name="Gu J."/>
            <person name="Shi J.-X."/>
            <person name="Jin W.-R."/>
            <person name="Zhang C.-K."/>
            <person name="Wu T.-M."/>
            <person name="Huang G.-Y."/>
            <person name="Chen Z."/>
            <person name="Chen M.-D."/>
            <person name="Chen J.-L."/>
        </authorList>
    </citation>
    <scope>NUCLEOTIDE SEQUENCE [LARGE SCALE MRNA] (ISOFORM 1)</scope>
    <source>
        <tissue>Adrenal gland</tissue>
    </source>
</reference>
<reference key="5">
    <citation type="submission" date="1999-11" db="EMBL/GenBank/DDBJ databases">
        <title>Novel genes expressed in human dendritic cell.</title>
        <authorList>
            <person name="Li N."/>
            <person name="Peng Y."/>
            <person name="Li Y."/>
            <person name="Gu W."/>
            <person name="Han Z."/>
            <person name="Fu G."/>
            <person name="Chen Z."/>
        </authorList>
    </citation>
    <scope>NUCLEOTIDE SEQUENCE [LARGE SCALE MRNA] (ISOFORM 1)</scope>
    <source>
        <tissue>Dendritic cell</tissue>
    </source>
</reference>
<reference key="6">
    <citation type="journal article" date="2004" name="Nat. Genet.">
        <title>Complete sequencing and characterization of 21,243 full-length human cDNAs.</title>
        <authorList>
            <person name="Ota T."/>
            <person name="Suzuki Y."/>
            <person name="Nishikawa T."/>
            <person name="Otsuki T."/>
            <person name="Sugiyama T."/>
            <person name="Irie R."/>
            <person name="Wakamatsu A."/>
            <person name="Hayashi K."/>
            <person name="Sato H."/>
            <person name="Nagai K."/>
            <person name="Kimura K."/>
            <person name="Makita H."/>
            <person name="Sekine M."/>
            <person name="Obayashi M."/>
            <person name="Nishi T."/>
            <person name="Shibahara T."/>
            <person name="Tanaka T."/>
            <person name="Ishii S."/>
            <person name="Yamamoto J."/>
            <person name="Saito K."/>
            <person name="Kawai Y."/>
            <person name="Isono Y."/>
            <person name="Nakamura Y."/>
            <person name="Nagahari K."/>
            <person name="Murakami K."/>
            <person name="Yasuda T."/>
            <person name="Iwayanagi T."/>
            <person name="Wagatsuma M."/>
            <person name="Shiratori A."/>
            <person name="Sudo H."/>
            <person name="Hosoiri T."/>
            <person name="Kaku Y."/>
            <person name="Kodaira H."/>
            <person name="Kondo H."/>
            <person name="Sugawara M."/>
            <person name="Takahashi M."/>
            <person name="Kanda K."/>
            <person name="Yokoi T."/>
            <person name="Furuya T."/>
            <person name="Kikkawa E."/>
            <person name="Omura Y."/>
            <person name="Abe K."/>
            <person name="Kamihara K."/>
            <person name="Katsuta N."/>
            <person name="Sato K."/>
            <person name="Tanikawa M."/>
            <person name="Yamazaki M."/>
            <person name="Ninomiya K."/>
            <person name="Ishibashi T."/>
            <person name="Yamashita H."/>
            <person name="Murakawa K."/>
            <person name="Fujimori K."/>
            <person name="Tanai H."/>
            <person name="Kimata M."/>
            <person name="Watanabe M."/>
            <person name="Hiraoka S."/>
            <person name="Chiba Y."/>
            <person name="Ishida S."/>
            <person name="Ono Y."/>
            <person name="Takiguchi S."/>
            <person name="Watanabe S."/>
            <person name="Yosida M."/>
            <person name="Hotuta T."/>
            <person name="Kusano J."/>
            <person name="Kanehori K."/>
            <person name="Takahashi-Fujii A."/>
            <person name="Hara H."/>
            <person name="Tanase T.-O."/>
            <person name="Nomura Y."/>
            <person name="Togiya S."/>
            <person name="Komai F."/>
            <person name="Hara R."/>
            <person name="Takeuchi K."/>
            <person name="Arita M."/>
            <person name="Imose N."/>
            <person name="Musashino K."/>
            <person name="Yuuki H."/>
            <person name="Oshima A."/>
            <person name="Sasaki N."/>
            <person name="Aotsuka S."/>
            <person name="Yoshikawa Y."/>
            <person name="Matsunawa H."/>
            <person name="Ichihara T."/>
            <person name="Shiohata N."/>
            <person name="Sano S."/>
            <person name="Moriya S."/>
            <person name="Momiyama H."/>
            <person name="Satoh N."/>
            <person name="Takami S."/>
            <person name="Terashima Y."/>
            <person name="Suzuki O."/>
            <person name="Nakagawa S."/>
            <person name="Senoh A."/>
            <person name="Mizoguchi H."/>
            <person name="Goto Y."/>
            <person name="Shimizu F."/>
            <person name="Wakebe H."/>
            <person name="Hishigaki H."/>
            <person name="Watanabe T."/>
            <person name="Sugiyama A."/>
            <person name="Takemoto M."/>
            <person name="Kawakami B."/>
            <person name="Yamazaki M."/>
            <person name="Watanabe K."/>
            <person name="Kumagai A."/>
            <person name="Itakura S."/>
            <person name="Fukuzumi Y."/>
            <person name="Fujimori Y."/>
            <person name="Komiyama M."/>
            <person name="Tashiro H."/>
            <person name="Tanigami A."/>
            <person name="Fujiwara T."/>
            <person name="Ono T."/>
            <person name="Yamada K."/>
            <person name="Fujii Y."/>
            <person name="Ozaki K."/>
            <person name="Hirao M."/>
            <person name="Ohmori Y."/>
            <person name="Kawabata A."/>
            <person name="Hikiji T."/>
            <person name="Kobatake N."/>
            <person name="Inagaki H."/>
            <person name="Ikema Y."/>
            <person name="Okamoto S."/>
            <person name="Okitani R."/>
            <person name="Kawakami T."/>
            <person name="Noguchi S."/>
            <person name="Itoh T."/>
            <person name="Shigeta K."/>
            <person name="Senba T."/>
            <person name="Matsumura K."/>
            <person name="Nakajima Y."/>
            <person name="Mizuno T."/>
            <person name="Morinaga M."/>
            <person name="Sasaki M."/>
            <person name="Togashi T."/>
            <person name="Oyama M."/>
            <person name="Hata H."/>
            <person name="Watanabe M."/>
            <person name="Komatsu T."/>
            <person name="Mizushima-Sugano J."/>
            <person name="Satoh T."/>
            <person name="Shirai Y."/>
            <person name="Takahashi Y."/>
            <person name="Nakagawa K."/>
            <person name="Okumura K."/>
            <person name="Nagase T."/>
            <person name="Nomura N."/>
            <person name="Kikuchi H."/>
            <person name="Masuho Y."/>
            <person name="Yamashita R."/>
            <person name="Nakai K."/>
            <person name="Yada T."/>
            <person name="Nakamura Y."/>
            <person name="Ohara O."/>
            <person name="Isogai T."/>
            <person name="Sugano S."/>
        </authorList>
    </citation>
    <scope>NUCLEOTIDE SEQUENCE [LARGE SCALE MRNA] (ISOFORMS 1 AND 2)</scope>
    <source>
        <tissue>Tongue</tissue>
        <tissue>Urinary bladder</tissue>
    </source>
</reference>
<reference key="7">
    <citation type="journal article" date="2006" name="Nature">
        <title>Human chromosome 11 DNA sequence and analysis including novel gene identification.</title>
        <authorList>
            <person name="Taylor T.D."/>
            <person name="Noguchi H."/>
            <person name="Totoki Y."/>
            <person name="Toyoda A."/>
            <person name="Kuroki Y."/>
            <person name="Dewar K."/>
            <person name="Lloyd C."/>
            <person name="Itoh T."/>
            <person name="Takeda T."/>
            <person name="Kim D.-W."/>
            <person name="She X."/>
            <person name="Barlow K.F."/>
            <person name="Bloom T."/>
            <person name="Bruford E."/>
            <person name="Chang J.L."/>
            <person name="Cuomo C.A."/>
            <person name="Eichler E."/>
            <person name="FitzGerald M.G."/>
            <person name="Jaffe D.B."/>
            <person name="LaButti K."/>
            <person name="Nicol R."/>
            <person name="Park H.-S."/>
            <person name="Seaman C."/>
            <person name="Sougnez C."/>
            <person name="Yang X."/>
            <person name="Zimmer A.R."/>
            <person name="Zody M.C."/>
            <person name="Birren B.W."/>
            <person name="Nusbaum C."/>
            <person name="Fujiyama A."/>
            <person name="Hattori M."/>
            <person name="Rogers J."/>
            <person name="Lander E.S."/>
            <person name="Sakaki Y."/>
        </authorList>
    </citation>
    <scope>NUCLEOTIDE SEQUENCE [LARGE SCALE GENOMIC DNA]</scope>
</reference>
<reference key="8">
    <citation type="submission" date="2005-07" db="EMBL/GenBank/DDBJ databases">
        <authorList>
            <person name="Mural R.J."/>
            <person name="Istrail S."/>
            <person name="Sutton G.G."/>
            <person name="Florea L."/>
            <person name="Halpern A.L."/>
            <person name="Mobarry C.M."/>
            <person name="Lippert R."/>
            <person name="Walenz B."/>
            <person name="Shatkay H."/>
            <person name="Dew I."/>
            <person name="Miller J.R."/>
            <person name="Flanigan M.J."/>
            <person name="Edwards N.J."/>
            <person name="Bolanos R."/>
            <person name="Fasulo D."/>
            <person name="Halldorsson B.V."/>
            <person name="Hannenhalli S."/>
            <person name="Turner R."/>
            <person name="Yooseph S."/>
            <person name="Lu F."/>
            <person name="Nusskern D.R."/>
            <person name="Shue B.C."/>
            <person name="Zheng X.H."/>
            <person name="Zhong F."/>
            <person name="Delcher A.L."/>
            <person name="Huson D.H."/>
            <person name="Kravitz S.A."/>
            <person name="Mouchard L."/>
            <person name="Reinert K."/>
            <person name="Remington K.A."/>
            <person name="Clark A.G."/>
            <person name="Waterman M.S."/>
            <person name="Eichler E.E."/>
            <person name="Adams M.D."/>
            <person name="Hunkapiller M.W."/>
            <person name="Myers E.W."/>
            <person name="Venter J.C."/>
        </authorList>
    </citation>
    <scope>NUCLEOTIDE SEQUENCE [LARGE SCALE GENOMIC DNA]</scope>
</reference>
<reference key="9">
    <citation type="journal article" date="2004" name="Genome Res.">
        <title>The status, quality, and expansion of the NIH full-length cDNA project: the Mammalian Gene Collection (MGC).</title>
        <authorList>
            <consortium name="The MGC Project Team"/>
        </authorList>
    </citation>
    <scope>NUCLEOTIDE SEQUENCE [LARGE SCALE MRNA] (ISOFORM 1)</scope>
    <source>
        <tissue>Urinary bladder</tissue>
        <tissue>Uterus</tissue>
    </source>
</reference>
<reference key="10">
    <citation type="journal article" date="2007" name="BMC Genomics">
        <title>The full-ORF clone resource of the German cDNA consortium.</title>
        <authorList>
            <person name="Bechtel S."/>
            <person name="Rosenfelder H."/>
            <person name="Duda A."/>
            <person name="Schmidt C.P."/>
            <person name="Ernst U."/>
            <person name="Wellenreuther R."/>
            <person name="Mehrle A."/>
            <person name="Schuster C."/>
            <person name="Bahr A."/>
            <person name="Bloecker H."/>
            <person name="Heubner D."/>
            <person name="Hoerlein A."/>
            <person name="Michel G."/>
            <person name="Wedler H."/>
            <person name="Koehrer K."/>
            <person name="Ottenwaelder B."/>
            <person name="Poustka A."/>
            <person name="Wiemann S."/>
            <person name="Schupp I."/>
        </authorList>
    </citation>
    <scope>NUCLEOTIDE SEQUENCE [LARGE SCALE MRNA] OF 99-309 (ISOFORM 1)</scope>
    <source>
        <tissue>Kidney</tissue>
    </source>
</reference>
<reference key="11">
    <citation type="submission" date="2007-03" db="UniProtKB">
        <authorList>
            <person name="Lubec G."/>
            <person name="Afjehi-Sadat L."/>
        </authorList>
    </citation>
    <scope>PROTEIN SEQUENCE OF 235-246</scope>
    <scope>IDENTIFICATION BY MASS SPECTROMETRY</scope>
    <source>
        <tissue>Brain</tissue>
        <tissue>Cajal-Retzius cell</tissue>
    </source>
</reference>
<reference key="12">
    <citation type="journal article" date="2003" name="J. Biol. Chem.">
        <title>Cloning, expression, and characterization of a human 4'-phosphopantetheinyl transferase with broad substrate specificity.</title>
        <authorList>
            <person name="Joshi A.K."/>
            <person name="Zhang L."/>
            <person name="Rangan V.S."/>
            <person name="Smith S."/>
        </authorList>
    </citation>
    <scope>FUNCTION</scope>
    <scope>CATALYTIC ACTIVITY</scope>
    <scope>SUBUNIT</scope>
    <scope>SUBCELLULAR LOCATION</scope>
    <scope>COFACTOR</scope>
    <scope>IDENTIFICATION BY MASS SPECTROMETRY</scope>
    <scope>TISSUE SPECIFICITY</scope>
</reference>
<reference key="13">
    <citation type="journal article" date="2007" name="Science">
        <title>ATM and ATR substrate analysis reveals extensive protein networks responsive to DNA damage.</title>
        <authorList>
            <person name="Matsuoka S."/>
            <person name="Ballif B.A."/>
            <person name="Smogorzewska A."/>
            <person name="McDonald E.R. III"/>
            <person name="Hurov K.E."/>
            <person name="Luo J."/>
            <person name="Bakalarski C.E."/>
            <person name="Zhao Z."/>
            <person name="Solimini N."/>
            <person name="Lerenthal Y."/>
            <person name="Shiloh Y."/>
            <person name="Gygi S.P."/>
            <person name="Elledge S.J."/>
        </authorList>
    </citation>
    <scope>PHOSPHORYLATION [LARGE SCALE ANALYSIS] AT SER-258</scope>
    <scope>IDENTIFICATION BY MASS SPECTROMETRY [LARGE SCALE ANALYSIS]</scope>
    <source>
        <tissue>Embryonic kidney</tissue>
    </source>
</reference>
<reference key="14">
    <citation type="journal article" date="2008" name="Proc. Natl. Acad. Sci. U.S.A.">
        <title>A quantitative atlas of mitotic phosphorylation.</title>
        <authorList>
            <person name="Dephoure N."/>
            <person name="Zhou C."/>
            <person name="Villen J."/>
            <person name="Beausoleil S.A."/>
            <person name="Bakalarski C.E."/>
            <person name="Elledge S.J."/>
            <person name="Gygi S.P."/>
        </authorList>
    </citation>
    <scope>PHOSPHORYLATION [LARGE SCALE ANALYSIS] AT SER-258</scope>
    <scope>IDENTIFICATION BY MASS SPECTROMETRY [LARGE SCALE ANALYSIS]</scope>
    <source>
        <tissue>Cervix carcinoma</tissue>
    </source>
</reference>
<reference key="15">
    <citation type="journal article" date="2010" name="J. Biol. Chem.">
        <title>Acyl carrier protein-specific 4'-phosphopantetheinyl transferase activates 10-formyltetrahydrofolate dehydrogenase.</title>
        <authorList>
            <person name="Strickland K.C."/>
            <person name="Hoeferlin L.A."/>
            <person name="Oleinik N.V."/>
            <person name="Krupenko N.I."/>
            <person name="Krupenko S.A."/>
        </authorList>
    </citation>
    <scope>FUNCTION</scope>
    <scope>CATALYTIC ACTIVITY</scope>
</reference>
<reference key="16">
    <citation type="journal article" date="2010" name="Sci. Signal.">
        <title>Quantitative phosphoproteomics reveals widespread full phosphorylation site occupancy during mitosis.</title>
        <authorList>
            <person name="Olsen J.V."/>
            <person name="Vermeulen M."/>
            <person name="Santamaria A."/>
            <person name="Kumar C."/>
            <person name="Miller M.L."/>
            <person name="Jensen L.J."/>
            <person name="Gnad F."/>
            <person name="Cox J."/>
            <person name="Jensen T.S."/>
            <person name="Nigg E.A."/>
            <person name="Brunak S."/>
            <person name="Mann M."/>
        </authorList>
    </citation>
    <scope>PHOSPHORYLATION [LARGE SCALE ANALYSIS] AT SER-258</scope>
    <scope>IDENTIFICATION BY MASS SPECTROMETRY [LARGE SCALE ANALYSIS]</scope>
    <source>
        <tissue>Cervix carcinoma</tissue>
    </source>
</reference>
<reference key="17">
    <citation type="journal article" date="2011" name="BMC Syst. Biol.">
        <title>Initial characterization of the human central proteome.</title>
        <authorList>
            <person name="Burkard T.R."/>
            <person name="Planyavsky M."/>
            <person name="Kaupe I."/>
            <person name="Breitwieser F.P."/>
            <person name="Buerckstuemmer T."/>
            <person name="Bennett K.L."/>
            <person name="Superti-Furga G."/>
            <person name="Colinge J."/>
        </authorList>
    </citation>
    <scope>IDENTIFICATION BY MASS SPECTROMETRY [LARGE SCALE ANALYSIS]</scope>
</reference>
<reference key="18">
    <citation type="journal article" date="2011" name="Chem. Biol. Interact.">
        <title>Enzymatic properties of ALDH1L2, a mitochondrial 10-formyltetrahydrofolate dehydrogenase.</title>
        <authorList>
            <person name="Strickland K.C."/>
            <person name="Krupenko N.I."/>
            <person name="Dubard M.E."/>
            <person name="Hu C.J."/>
            <person name="Tsybovsky Y."/>
            <person name="Krupenko S.A."/>
        </authorList>
    </citation>
    <scope>FUNCTION</scope>
    <scope>CATALYTIC ACTIVITY</scope>
</reference>
<reference key="19">
    <citation type="journal article" date="2013" name="J. Proteome Res.">
        <title>Toward a comprehensive characterization of a human cancer cell phosphoproteome.</title>
        <authorList>
            <person name="Zhou H."/>
            <person name="Di Palma S."/>
            <person name="Preisinger C."/>
            <person name="Peng M."/>
            <person name="Polat A.N."/>
            <person name="Heck A.J."/>
            <person name="Mohammed S."/>
        </authorList>
    </citation>
    <scope>PHOSPHORYLATION [LARGE SCALE ANALYSIS] AT SER-258</scope>
    <scope>IDENTIFICATION BY MASS SPECTROMETRY [LARGE SCALE ANALYSIS]</scope>
    <source>
        <tissue>Erythroleukemia</tissue>
    </source>
</reference>
<reference key="20">
    <citation type="journal article" date="2014" name="J. Proteomics">
        <title>An enzyme assisted RP-RPLC approach for in-depth analysis of human liver phosphoproteome.</title>
        <authorList>
            <person name="Bian Y."/>
            <person name="Song C."/>
            <person name="Cheng K."/>
            <person name="Dong M."/>
            <person name="Wang F."/>
            <person name="Huang J."/>
            <person name="Sun D."/>
            <person name="Wang L."/>
            <person name="Ye M."/>
            <person name="Zou H."/>
        </authorList>
    </citation>
    <scope>IDENTIFICATION BY MASS SPECTROMETRY [LARGE SCALE ANALYSIS]</scope>
    <source>
        <tissue>Liver</tissue>
    </source>
</reference>
<reference key="21">
    <citation type="journal article" date="2007" name="Chem. Biol.">
        <title>Mechanism and substrate recognition of human holo ACP synthase.</title>
        <authorList>
            <person name="Bunkoczi G."/>
            <person name="Pasta S."/>
            <person name="Joshi A."/>
            <person name="Wu X."/>
            <person name="Kavanagh K.L."/>
            <person name="Smith S."/>
            <person name="Oppermann U."/>
        </authorList>
    </citation>
    <scope>X-RAY CRYSTALLOGRAPHY (1.93 ANGSTROMS) OF 14-309 IN COMPLEXES WITH COENZYME A; MAGNESIUM IONS AND FASN</scope>
    <scope>FUNCTION</scope>
    <scope>CATALYTIC ACTIVITY</scope>
    <scope>BIOPHYSICOCHEMICAL PROPERTIES</scope>
    <scope>COFACTOR</scope>
    <scope>MUTAGENESIS OF ARG-47; ARG-86; HIS-111; GLN-112; ASP-129; GLU-181 AND LYS-185</scope>
</reference>
<comment type="function">
    <text evidence="1 2 3 4 5">Catalyzes the post-translational modification of target proteins by phosphopantetheine. Can transfer the 4'-phosphopantetheine moiety from coenzyme A, regardless of whether the CoA is presented in the free thiol form or as an acetyl thioester, to a serine residue of a broad range of acceptors including the acyl carrier domain of FASN.</text>
</comment>
<comment type="catalytic activity">
    <reaction evidence="2 3 4 5">
        <text>apo-[ACP] + CoA = holo-[ACP] + adenosine 3',5'-bisphosphate + H(+)</text>
        <dbReference type="Rhea" id="RHEA:12068"/>
        <dbReference type="Rhea" id="RHEA-COMP:9685"/>
        <dbReference type="Rhea" id="RHEA-COMP:9690"/>
        <dbReference type="ChEBI" id="CHEBI:15378"/>
        <dbReference type="ChEBI" id="CHEBI:29999"/>
        <dbReference type="ChEBI" id="CHEBI:57287"/>
        <dbReference type="ChEBI" id="CHEBI:58343"/>
        <dbReference type="ChEBI" id="CHEBI:64479"/>
        <dbReference type="EC" id="2.7.8.7"/>
    </reaction>
    <physiologicalReaction direction="left-to-right" evidence="4 5">
        <dbReference type="Rhea" id="RHEA:12069"/>
    </physiologicalReaction>
</comment>
<comment type="catalytic activity">
    <reaction evidence="2 3">
        <text>apo-[ACP] + acetyl-CoA = acetyl-[ACP] + adenosine 3',5'-bisphosphate + H(+)</text>
        <dbReference type="Rhea" id="RHEA:46564"/>
        <dbReference type="Rhea" id="RHEA-COMP:9621"/>
        <dbReference type="Rhea" id="RHEA-COMP:9690"/>
        <dbReference type="ChEBI" id="CHEBI:15378"/>
        <dbReference type="ChEBI" id="CHEBI:29999"/>
        <dbReference type="ChEBI" id="CHEBI:57288"/>
        <dbReference type="ChEBI" id="CHEBI:58343"/>
        <dbReference type="ChEBI" id="CHEBI:78446"/>
    </reaction>
    <physiologicalReaction direction="left-to-right" evidence="8">
        <dbReference type="Rhea" id="RHEA:46565"/>
    </physiologicalReaction>
</comment>
<comment type="cofactor">
    <cofactor evidence="2 3">
        <name>Mg(2+)</name>
        <dbReference type="ChEBI" id="CHEBI:18420"/>
    </cofactor>
    <text evidence="2 3">Binds 1 Mg(2+) ion.</text>
</comment>
<comment type="biophysicochemical properties">
    <kinetics>
        <KM evidence="3">0.44 mM for magnesium</KM>
        <KM evidence="3">0.025 mM for coenzyme A</KM>
    </kinetics>
    <phDependence>
        <text evidence="2">Optimum pH is 6-10.</text>
    </phDependence>
</comment>
<comment type="subunit">
    <text evidence="2">Monomer.</text>
</comment>
<comment type="interaction">
    <interactant intactId="EBI-740884">
        <id>Q9NRN7</id>
    </interactant>
    <interactant intactId="EBI-748171">
        <id>O43186</id>
        <label>CRX</label>
    </interactant>
    <organismsDiffer>false</organismsDiffer>
    <experiments>3</experiments>
</comment>
<comment type="interaction">
    <interactant intactId="EBI-740884">
        <id>Q9NRN7</id>
    </interactant>
    <interactant intactId="EBI-2349927">
        <id>Q5JST6</id>
        <label>EFHC2</label>
    </interactant>
    <organismsDiffer>false</organismsDiffer>
    <experiments>3</experiments>
</comment>
<comment type="interaction">
    <interactant intactId="EBI-740884">
        <id>Q9NRN7</id>
    </interactant>
    <interactant intactId="EBI-747107">
        <id>Q8IUQ4</id>
        <label>SIAH1</label>
    </interactant>
    <organismsDiffer>false</organismsDiffer>
    <experiments>3</experiments>
</comment>
<comment type="interaction">
    <interactant intactId="EBI-740884">
        <id>Q9NRN7</id>
    </interactant>
    <interactant intactId="EBI-355744">
        <id>Q12933</id>
        <label>TRAF2</label>
    </interactant>
    <organismsDiffer>false</organismsDiffer>
    <experiments>7</experiments>
</comment>
<comment type="interaction">
    <interactant intactId="EBI-740884">
        <id>Q9NRN7</id>
    </interactant>
    <interactant intactId="EBI-723510">
        <id>Q9UPT9</id>
        <label>USP22</label>
    </interactant>
    <organismsDiffer>false</organismsDiffer>
    <experiments>7</experiments>
</comment>
<comment type="interaction">
    <interactant intactId="EBI-740884">
        <id>Q9NRN7</id>
    </interactant>
    <interactant intactId="EBI-12074414">
        <id>Q9UPT9-2</id>
        <label>USP22</label>
    </interactant>
    <organismsDiffer>false</organismsDiffer>
    <experiments>11</experiments>
</comment>
<comment type="subcellular location">
    <subcellularLocation>
        <location evidence="2">Cytoplasm</location>
        <location evidence="2">Cytosol</location>
    </subcellularLocation>
</comment>
<comment type="alternative products">
    <event type="alternative splicing"/>
    <isoform>
        <id>Q9NRN7-1</id>
        <name>1</name>
        <sequence type="displayed"/>
    </isoform>
    <isoform>
        <id>Q9NRN7-2</id>
        <name>2</name>
        <sequence type="described" ref="VSP_055783 VSP_055784"/>
    </isoform>
</comment>
<comment type="tissue specificity">
    <text evidence="1 2">Detected in heart, skeletal muscle, placenta, testis, brain, pancreas, liver and kidney.</text>
</comment>
<comment type="similarity">
    <text evidence="7">Belongs to the P-Pant transferase superfamily. AcpS family.</text>
</comment>
<comment type="sequence caution" evidence="7">
    <conflict type="frameshift">
        <sequence resource="EMBL-CDS" id="AAD34075"/>
    </conflict>
</comment>
<comment type="sequence caution" evidence="7">
    <conflict type="erroneous initiation">
        <sequence resource="EMBL-CDS" id="AAF86879"/>
    </conflict>
</comment>
<proteinExistence type="evidence at protein level"/>
<accession>Q9NRN7</accession>
<accession>B2R6D1</accession>
<accession>B4DDW7</accession>
<accession>Q9C068</accession>
<accession>Q9P0Q3</accession>
<accession>Q9UG80</accession>
<accession>Q9Y389</accession>
<name>ADPPT_HUMAN</name>
<keyword id="KW-0002">3D-structure</keyword>
<keyword id="KW-0025">Alternative splicing</keyword>
<keyword id="KW-0963">Cytoplasm</keyword>
<keyword id="KW-0903">Direct protein sequencing</keyword>
<keyword id="KW-0460">Magnesium</keyword>
<keyword id="KW-0479">Metal-binding</keyword>
<keyword id="KW-0597">Phosphoprotein</keyword>
<keyword id="KW-1267">Proteomics identification</keyword>
<keyword id="KW-1185">Reference proteome</keyword>
<keyword id="KW-0808">Transferase</keyword>
<sequence length="309" mass="35776">MVFPAKRFCLVPSMEGVRWAFSCGTWLPSRAEWLLAVRSIQPEEKERIGQFVFARDAKAAMAGRLMIRKLVAEKLNIPWNHIRLQRTAKGKPVLAKDSSNPYPNFNFNISHQGDYAVLAAEPELQVGIDIMKTSFPGRGSIPEFFHIMKRKFTNKEWETIRSFKDEWTQLDMFYRNWALKESFIKAIGVGLGFELQRLEFDLSPLNLDIGQVYKETRLFLDGEEEKEWAFEESKIDEHHFVAVALRKPDGSRHQDVPSQDDSKPTQRQFTILNFNDLMSSAVPMTPEDPSFWDCFCFTEEIPIRNGTKS</sequence>
<gene>
    <name type="primary">AASDHPPT</name>
    <name type="ORF">CGI-80</name>
    <name type="ORF">HAH-P</name>
    <name type="ORF">HSPC223</name>
    <name type="ORF">x0005</name>
</gene>
<feature type="chain" id="PRO_0000175736" description="L-aminoadipate-semialdehyde dehydrogenase-phosphopantetheinyl transferase">
    <location>
        <begin position="1"/>
        <end position="309"/>
    </location>
</feature>
<feature type="binding site" evidence="3 9 10">
    <location>
        <position position="47"/>
    </location>
    <ligand>
        <name>CoA</name>
        <dbReference type="ChEBI" id="CHEBI:57287"/>
    </ligand>
</feature>
<feature type="binding site" evidence="3 9 10">
    <location>
        <begin position="86"/>
        <end position="91"/>
    </location>
    <ligand>
        <name>CoA</name>
        <dbReference type="ChEBI" id="CHEBI:57287"/>
    </ligand>
</feature>
<feature type="binding site" evidence="3 9 10">
    <location>
        <begin position="108"/>
        <end position="111"/>
    </location>
    <ligand>
        <name>CoA</name>
        <dbReference type="ChEBI" id="CHEBI:57287"/>
    </ligand>
</feature>
<feature type="binding site" evidence="3 9">
    <location>
        <position position="129"/>
    </location>
    <ligand>
        <name>Mg(2+)</name>
        <dbReference type="ChEBI" id="CHEBI:18420"/>
    </ligand>
</feature>
<feature type="binding site" evidence="3 9 10">
    <location>
        <begin position="181"/>
        <end position="185"/>
    </location>
    <ligand>
        <name>CoA</name>
        <dbReference type="ChEBI" id="CHEBI:57287"/>
    </ligand>
</feature>
<feature type="binding site" evidence="3 9">
    <location>
        <position position="181"/>
    </location>
    <ligand>
        <name>Mg(2+)</name>
        <dbReference type="ChEBI" id="CHEBI:18420"/>
    </ligand>
</feature>
<feature type="modified residue" description="Phosphoserine" evidence="11 12 13 14">
    <location>
        <position position="258"/>
    </location>
</feature>
<feature type="splice variant" id="VSP_055783" description="In isoform 2." evidence="6">
    <original>R</original>
    <variation>T</variation>
    <location>
        <position position="138"/>
    </location>
</feature>
<feature type="splice variant" id="VSP_055784" description="In isoform 2." evidence="6">
    <location>
        <begin position="139"/>
        <end position="309"/>
    </location>
</feature>
<feature type="mutagenesis site" description="Reduces affinity for magnesium by 7-fold, and holo-[acyl-carrier-protein] synthase activity by 2-fold." evidence="3">
    <original>R</original>
    <variation>A</variation>
    <location>
        <position position="47"/>
    </location>
</feature>
<feature type="mutagenesis site" description="Reduces affinity for magnesium and coenzyme A, and reduces holo-[acyl-carrier-protein] synthase activity by 7-fold." evidence="3">
    <original>R</original>
    <variation>A</variation>
    <location>
        <position position="86"/>
    </location>
</feature>
<feature type="mutagenesis site" description="Reduces affinity for magnesium by 75-fold, and holo-[acyl-carrier-protein] synthase activity by 150-fold." evidence="3">
    <original>H</original>
    <variation>A</variation>
    <location>
        <position position="111"/>
    </location>
</feature>
<feature type="mutagenesis site" description="Reduces affinity for magnesium by 200-fold and abolishes holo-[acyl-carrier-protein] synthase activity; when associated with Q-181." evidence="3">
    <original>Q</original>
    <variation>E</variation>
    <location>
        <position position="112"/>
    </location>
</feature>
<feature type="mutagenesis site" description="Reduces affinity for magnesium by 10-fold, and holo-[acyl-carrier-protein] synthase activity by 30000-fold." evidence="3">
    <original>D</original>
    <variation>A</variation>
    <location>
        <position position="129"/>
    </location>
</feature>
<feature type="mutagenesis site" description="Reduces affinity for magnesium by 40-fold, and holo-[acyl-carrier-protein] synthase activity by 32000-fold." evidence="3">
    <original>E</original>
    <variation>A</variation>
    <location>
        <position position="181"/>
    </location>
</feature>
<feature type="mutagenesis site" description="Reduces affinity for magnesium by 20-fold, and holo-[acyl-carrier-protein] synthase activity by 6500-fold." evidence="3">
    <original>E</original>
    <variation>Q</variation>
    <location>
        <position position="181"/>
    </location>
</feature>
<feature type="mutagenesis site" description="Reduces holo-[acyl-carrier-protein] synthase activity by 2000-fold, with only minor change in the affinity for magnesium and coenzyme A." evidence="3">
    <original>K</original>
    <variation>A</variation>
    <location>
        <position position="185"/>
    </location>
</feature>
<feature type="sequence conflict" description="In Ref. 4; AAG49439." evidence="7" ref="4">
    <original>PGRGSI</original>
    <variation>FQVVVQF</variation>
    <location>
        <begin position="136"/>
        <end position="141"/>
    </location>
</feature>
<feature type="sequence conflict" description="In Ref. 4; AAG49439." evidence="7" ref="4">
    <original>TKS</original>
    <variation>YKVMMIP</variation>
    <location>
        <begin position="307"/>
        <end position="309"/>
    </location>
</feature>
<feature type="strand" evidence="16">
    <location>
        <begin position="17"/>
        <end position="21"/>
    </location>
</feature>
<feature type="helix" evidence="16">
    <location>
        <begin position="23"/>
        <end position="25"/>
    </location>
</feature>
<feature type="helix" evidence="16">
    <location>
        <begin position="30"/>
        <end position="38"/>
    </location>
</feature>
<feature type="helix" evidence="16">
    <location>
        <begin position="42"/>
        <end position="49"/>
    </location>
</feature>
<feature type="helix" evidence="16">
    <location>
        <begin position="54"/>
        <end position="74"/>
    </location>
</feature>
<feature type="helix" evidence="16">
    <location>
        <begin position="79"/>
        <end position="81"/>
    </location>
</feature>
<feature type="strand" evidence="16">
    <location>
        <begin position="84"/>
        <end position="86"/>
    </location>
</feature>
<feature type="strand" evidence="16">
    <location>
        <begin position="92"/>
        <end position="94"/>
    </location>
</feature>
<feature type="strand" evidence="16">
    <location>
        <begin position="102"/>
        <end position="104"/>
    </location>
</feature>
<feature type="strand" evidence="16">
    <location>
        <begin position="106"/>
        <end position="112"/>
    </location>
</feature>
<feature type="strand" evidence="16">
    <location>
        <begin position="115"/>
        <end position="132"/>
    </location>
</feature>
<feature type="strand" evidence="16">
    <location>
        <begin position="137"/>
        <end position="139"/>
    </location>
</feature>
<feature type="helix" evidence="16">
    <location>
        <begin position="141"/>
        <end position="147"/>
    </location>
</feature>
<feature type="helix" evidence="16">
    <location>
        <begin position="149"/>
        <end position="151"/>
    </location>
</feature>
<feature type="helix" evidence="16">
    <location>
        <begin position="154"/>
        <end position="160"/>
    </location>
</feature>
<feature type="strand" evidence="16">
    <location>
        <begin position="163"/>
        <end position="165"/>
    </location>
</feature>
<feature type="helix" evidence="16">
    <location>
        <begin position="166"/>
        <end position="187"/>
    </location>
</feature>
<feature type="helix" evidence="15">
    <location>
        <begin position="190"/>
        <end position="192"/>
    </location>
</feature>
<feature type="helix" evidence="16">
    <location>
        <begin position="195"/>
        <end position="197"/>
    </location>
</feature>
<feature type="strand" evidence="16">
    <location>
        <begin position="198"/>
        <end position="201"/>
    </location>
</feature>
<feature type="strand" evidence="15">
    <location>
        <begin position="203"/>
        <end position="206"/>
    </location>
</feature>
<feature type="strand" evidence="16">
    <location>
        <begin position="217"/>
        <end position="220"/>
    </location>
</feature>
<feature type="strand" evidence="16">
    <location>
        <begin position="228"/>
        <end position="236"/>
    </location>
</feature>
<feature type="strand" evidence="16">
    <location>
        <begin position="239"/>
        <end position="246"/>
    </location>
</feature>
<feature type="strand" evidence="16">
    <location>
        <begin position="270"/>
        <end position="272"/>
    </location>
</feature>
<feature type="helix" evidence="16">
    <location>
        <begin position="274"/>
        <end position="277"/>
    </location>
</feature>
<feature type="turn" evidence="16">
    <location>
        <begin position="278"/>
        <end position="280"/>
    </location>
</feature>
<feature type="helix" evidence="16">
    <location>
        <begin position="289"/>
        <end position="291"/>
    </location>
</feature>
<feature type="helix" evidence="16">
    <location>
        <begin position="298"/>
        <end position="300"/>
    </location>
</feature>
<feature type="turn" evidence="15">
    <location>
        <begin position="305"/>
        <end position="307"/>
    </location>
</feature>
<protein>
    <recommendedName>
        <fullName>L-aminoadipate-semialdehyde dehydrogenase-phosphopantetheinyl transferase</fullName>
        <ecNumber evidence="2 3 4 5">2.7.8.7</ecNumber>
    </recommendedName>
    <alternativeName>
        <fullName>4'-phosphopantetheinyl transferase</fullName>
    </alternativeName>
    <alternativeName>
        <fullName>Alpha-aminoadipic semialdehyde dehydrogenase-phosphopantetheinyl transferase</fullName>
        <shortName>AASD-PPT</shortName>
    </alternativeName>
    <alternativeName>
        <fullName>LYS5 ortholog</fullName>
    </alternativeName>
</protein>
<evidence type="ECO:0000269" key="1">
    <source>
    </source>
</evidence>
<evidence type="ECO:0000269" key="2">
    <source>
    </source>
</evidence>
<evidence type="ECO:0000269" key="3">
    <source>
    </source>
</evidence>
<evidence type="ECO:0000269" key="4">
    <source>
    </source>
</evidence>
<evidence type="ECO:0000269" key="5">
    <source>
    </source>
</evidence>
<evidence type="ECO:0000303" key="6">
    <source>
    </source>
</evidence>
<evidence type="ECO:0000305" key="7"/>
<evidence type="ECO:0000305" key="8">
    <source>
    </source>
</evidence>
<evidence type="ECO:0007744" key="9">
    <source>
        <dbReference type="PDB" id="2C43"/>
    </source>
</evidence>
<evidence type="ECO:0007744" key="10">
    <source>
        <dbReference type="PDB" id="2CG5"/>
    </source>
</evidence>
<evidence type="ECO:0007744" key="11">
    <source>
    </source>
</evidence>
<evidence type="ECO:0007744" key="12">
    <source>
    </source>
</evidence>
<evidence type="ECO:0007744" key="13">
    <source>
    </source>
</evidence>
<evidence type="ECO:0007744" key="14">
    <source>
    </source>
</evidence>
<evidence type="ECO:0007829" key="15">
    <source>
        <dbReference type="PDB" id="2BYD"/>
    </source>
</evidence>
<evidence type="ECO:0007829" key="16">
    <source>
        <dbReference type="PDB" id="2C43"/>
    </source>
</evidence>